<gene>
    <name evidence="1" type="primary">proB</name>
    <name type="ordered locus">CMS1813</name>
</gene>
<evidence type="ECO:0000255" key="1">
    <source>
        <dbReference type="HAMAP-Rule" id="MF_00456"/>
    </source>
</evidence>
<sequence>MGTASRAGIASARRIVVKVGSSSISGENAGQIAPLVDAIAAAHARGAEVVLVSSGAIATGMPFLRLDDRPADLATQQAAAAVGQSVLIFRYQESLDRYGIVAGQVLLTAGDLAAPDHRENAQRAMERLLGLRLLPVVNENDTVATHEIRFGDNDRLAALVARLVDADLLLLLSDVDALYSRPPEEPGARRIEHVAFGDELEGVEIGSTGTGVGTGGAVTKVAAARLAAEAGTGVLLTSTAQVAEALAGAHVGTWFAPRS</sequence>
<keyword id="KW-0028">Amino-acid biosynthesis</keyword>
<keyword id="KW-0067">ATP-binding</keyword>
<keyword id="KW-0963">Cytoplasm</keyword>
<keyword id="KW-0418">Kinase</keyword>
<keyword id="KW-0547">Nucleotide-binding</keyword>
<keyword id="KW-0641">Proline biosynthesis</keyword>
<keyword id="KW-0808">Transferase</keyword>
<comment type="function">
    <text evidence="1">Catalyzes the transfer of a phosphate group to glutamate to form L-glutamate 5-phosphate.</text>
</comment>
<comment type="catalytic activity">
    <reaction evidence="1">
        <text>L-glutamate + ATP = L-glutamyl 5-phosphate + ADP</text>
        <dbReference type="Rhea" id="RHEA:14877"/>
        <dbReference type="ChEBI" id="CHEBI:29985"/>
        <dbReference type="ChEBI" id="CHEBI:30616"/>
        <dbReference type="ChEBI" id="CHEBI:58274"/>
        <dbReference type="ChEBI" id="CHEBI:456216"/>
        <dbReference type="EC" id="2.7.2.11"/>
    </reaction>
</comment>
<comment type="pathway">
    <text evidence="1">Amino-acid biosynthesis; L-proline biosynthesis; L-glutamate 5-semialdehyde from L-glutamate: step 1/2.</text>
</comment>
<comment type="subcellular location">
    <subcellularLocation>
        <location evidence="1">Cytoplasm</location>
    </subcellularLocation>
</comment>
<comment type="similarity">
    <text evidence="1">Belongs to the glutamate 5-kinase family.</text>
</comment>
<proteinExistence type="inferred from homology"/>
<organism>
    <name type="scientific">Clavibacter sepedonicus</name>
    <name type="common">Clavibacter michiganensis subsp. sepedonicus</name>
    <dbReference type="NCBI Taxonomy" id="31964"/>
    <lineage>
        <taxon>Bacteria</taxon>
        <taxon>Bacillati</taxon>
        <taxon>Actinomycetota</taxon>
        <taxon>Actinomycetes</taxon>
        <taxon>Micrococcales</taxon>
        <taxon>Microbacteriaceae</taxon>
        <taxon>Clavibacter</taxon>
    </lineage>
</organism>
<reference key="1">
    <citation type="journal article" date="2008" name="J. Bacteriol.">
        <title>Genome of the actinomycete plant pathogen Clavibacter michiganensis subsp. sepedonicus suggests recent niche adaptation.</title>
        <authorList>
            <person name="Bentley S.D."/>
            <person name="Corton C."/>
            <person name="Brown S.E."/>
            <person name="Barron A."/>
            <person name="Clark L."/>
            <person name="Doggett J."/>
            <person name="Harris B."/>
            <person name="Ormond D."/>
            <person name="Quail M.A."/>
            <person name="May G."/>
            <person name="Francis D."/>
            <person name="Knudson D."/>
            <person name="Parkhill J."/>
            <person name="Ishimaru C.A."/>
        </authorList>
    </citation>
    <scope>NUCLEOTIDE SEQUENCE [LARGE SCALE GENOMIC DNA]</scope>
    <source>
        <strain>ATCC 33113 / DSM 20744 / JCM 9667 / LMG 2889 / ICMP 2535 / C-1</strain>
    </source>
</reference>
<dbReference type="EC" id="2.7.2.11" evidence="1"/>
<dbReference type="EMBL" id="AM849034">
    <property type="protein sequence ID" value="CAQ01918.1"/>
    <property type="molecule type" value="Genomic_DNA"/>
</dbReference>
<dbReference type="RefSeq" id="WP_012299159.1">
    <property type="nucleotide sequence ID" value="NZ_MZMN01000003.1"/>
</dbReference>
<dbReference type="SMR" id="B0RDG2"/>
<dbReference type="STRING" id="31964.CMS1813"/>
<dbReference type="KEGG" id="cms:CMS1813"/>
<dbReference type="eggNOG" id="COG0263">
    <property type="taxonomic scope" value="Bacteria"/>
</dbReference>
<dbReference type="HOGENOM" id="CLU_025400_0_1_11"/>
<dbReference type="OrthoDB" id="9804434at2"/>
<dbReference type="UniPathway" id="UPA00098">
    <property type="reaction ID" value="UER00359"/>
</dbReference>
<dbReference type="Proteomes" id="UP000001318">
    <property type="component" value="Chromosome"/>
</dbReference>
<dbReference type="GO" id="GO:0005829">
    <property type="term" value="C:cytosol"/>
    <property type="evidence" value="ECO:0007669"/>
    <property type="project" value="TreeGrafter"/>
</dbReference>
<dbReference type="GO" id="GO:0005524">
    <property type="term" value="F:ATP binding"/>
    <property type="evidence" value="ECO:0007669"/>
    <property type="project" value="UniProtKB-KW"/>
</dbReference>
<dbReference type="GO" id="GO:0004349">
    <property type="term" value="F:glutamate 5-kinase activity"/>
    <property type="evidence" value="ECO:0007669"/>
    <property type="project" value="UniProtKB-UniRule"/>
</dbReference>
<dbReference type="GO" id="GO:0055129">
    <property type="term" value="P:L-proline biosynthetic process"/>
    <property type="evidence" value="ECO:0007669"/>
    <property type="project" value="UniProtKB-UniRule"/>
</dbReference>
<dbReference type="FunFam" id="3.40.1160.10:FF:000006">
    <property type="entry name" value="Glutamate 5-kinase"/>
    <property type="match status" value="1"/>
</dbReference>
<dbReference type="Gene3D" id="3.40.1160.10">
    <property type="entry name" value="Acetylglutamate kinase-like"/>
    <property type="match status" value="1"/>
</dbReference>
<dbReference type="HAMAP" id="MF_00456">
    <property type="entry name" value="ProB"/>
    <property type="match status" value="1"/>
</dbReference>
<dbReference type="InterPro" id="IPR036393">
    <property type="entry name" value="AceGlu_kinase-like_sf"/>
</dbReference>
<dbReference type="InterPro" id="IPR001048">
    <property type="entry name" value="Asp/Glu/Uridylate_kinase"/>
</dbReference>
<dbReference type="InterPro" id="IPR001057">
    <property type="entry name" value="Glu/AcGlu_kinase"/>
</dbReference>
<dbReference type="InterPro" id="IPR011529">
    <property type="entry name" value="Glu_5kinase"/>
</dbReference>
<dbReference type="InterPro" id="IPR005715">
    <property type="entry name" value="Glu_5kinase/COase_Synthase"/>
</dbReference>
<dbReference type="NCBIfam" id="TIGR01027">
    <property type="entry name" value="proB"/>
    <property type="match status" value="1"/>
</dbReference>
<dbReference type="PANTHER" id="PTHR43654">
    <property type="entry name" value="GLUTAMATE 5-KINASE"/>
    <property type="match status" value="1"/>
</dbReference>
<dbReference type="PANTHER" id="PTHR43654:SF1">
    <property type="entry name" value="ISOPENTENYL PHOSPHATE KINASE"/>
    <property type="match status" value="1"/>
</dbReference>
<dbReference type="Pfam" id="PF00696">
    <property type="entry name" value="AA_kinase"/>
    <property type="match status" value="1"/>
</dbReference>
<dbReference type="PIRSF" id="PIRSF000729">
    <property type="entry name" value="GK"/>
    <property type="match status" value="1"/>
</dbReference>
<dbReference type="PRINTS" id="PR00474">
    <property type="entry name" value="GLU5KINASE"/>
</dbReference>
<dbReference type="SUPFAM" id="SSF53633">
    <property type="entry name" value="Carbamate kinase-like"/>
    <property type="match status" value="1"/>
</dbReference>
<accession>B0RDG2</accession>
<protein>
    <recommendedName>
        <fullName evidence="1">Glutamate 5-kinase</fullName>
        <ecNumber evidence="1">2.7.2.11</ecNumber>
    </recommendedName>
    <alternativeName>
        <fullName evidence="1">Gamma-glutamyl kinase</fullName>
        <shortName evidence="1">GK</shortName>
    </alternativeName>
</protein>
<name>PROB_CLASE</name>
<feature type="chain" id="PRO_1000081051" description="Glutamate 5-kinase">
    <location>
        <begin position="1"/>
        <end position="259"/>
    </location>
</feature>
<feature type="binding site" evidence="1">
    <location>
        <position position="18"/>
    </location>
    <ligand>
        <name>ATP</name>
        <dbReference type="ChEBI" id="CHEBI:30616"/>
    </ligand>
</feature>
<feature type="binding site" evidence="1">
    <location>
        <position position="54"/>
    </location>
    <ligand>
        <name>substrate</name>
    </ligand>
</feature>
<feature type="binding site" evidence="1">
    <location>
        <position position="141"/>
    </location>
    <ligand>
        <name>substrate</name>
    </ligand>
</feature>
<feature type="binding site" evidence="1">
    <location>
        <position position="153"/>
    </location>
    <ligand>
        <name>substrate</name>
    </ligand>
</feature>
<feature type="binding site" evidence="1">
    <location>
        <begin position="173"/>
        <end position="174"/>
    </location>
    <ligand>
        <name>ATP</name>
        <dbReference type="ChEBI" id="CHEBI:30616"/>
    </ligand>
</feature>